<gene>
    <name type="ORF">AFUA_1G07730</name>
</gene>
<sequence length="322" mass="35778">MLPFNSCVYVLLIISLMSNCRALCRATALQGRSLCATGGPDAAFRAEHERLSAFESRPSSGSYDMRRALEPIEIETWFHIVSGETDADLVTDEMVILQLHYLQKAYEKASISYRLKGVTRHINETWARNGDDSAMKKALRRGGYSTLNVYFQTNLQPPSTTDFARWTSDGDNRHAYNSDLAPLSVLGFCTLPDPSINSSSPRSSYSKDGCNVLAKTMPGGPMTHYNRGGTAIHEIGHWNGLLHTFEGESCSEDNAGDYIADTPQQSVPTDGCPSQKDSCPDSPGLDDIHNFMDYSSDDCYASFTSNQLKRMRDMWFSMRKGK</sequence>
<protein>
    <recommendedName>
        <fullName>Extracellular metalloprotease AFUA_1G07730</fullName>
        <ecNumber>3.4.24.-</ecNumber>
    </recommendedName>
</protein>
<dbReference type="EC" id="3.4.24.-"/>
<dbReference type="EMBL" id="AAHF01000007">
    <property type="protein sequence ID" value="EAL88481.1"/>
    <property type="status" value="ALT_INIT"/>
    <property type="molecule type" value="Genomic_DNA"/>
</dbReference>
<dbReference type="RefSeq" id="XP_750519.1">
    <property type="nucleotide sequence ID" value="XM_745426.1"/>
</dbReference>
<dbReference type="SMR" id="Q4WJ01"/>
<dbReference type="STRING" id="330879.Q4WJ01"/>
<dbReference type="GeneID" id="3507778"/>
<dbReference type="KEGG" id="afm:AFUA_1G07730"/>
<dbReference type="eggNOG" id="ENOG502S6EM">
    <property type="taxonomic scope" value="Eukaryota"/>
</dbReference>
<dbReference type="HOGENOM" id="CLU_048726_0_2_1"/>
<dbReference type="InParanoid" id="Q4WJ01"/>
<dbReference type="OMA" id="ECYERFT"/>
<dbReference type="OrthoDB" id="536211at2759"/>
<dbReference type="Proteomes" id="UP000002530">
    <property type="component" value="Chromosome 1"/>
</dbReference>
<dbReference type="GO" id="GO:0005576">
    <property type="term" value="C:extracellular region"/>
    <property type="evidence" value="ECO:0007669"/>
    <property type="project" value="UniProtKB-SubCell"/>
</dbReference>
<dbReference type="GO" id="GO:0046872">
    <property type="term" value="F:metal ion binding"/>
    <property type="evidence" value="ECO:0007669"/>
    <property type="project" value="UniProtKB-KW"/>
</dbReference>
<dbReference type="GO" id="GO:0008237">
    <property type="term" value="F:metallopeptidase activity"/>
    <property type="evidence" value="ECO:0007669"/>
    <property type="project" value="UniProtKB-KW"/>
</dbReference>
<dbReference type="GO" id="GO:0006508">
    <property type="term" value="P:proteolysis"/>
    <property type="evidence" value="ECO:0007669"/>
    <property type="project" value="UniProtKB-KW"/>
</dbReference>
<dbReference type="CDD" id="cd04275">
    <property type="entry name" value="ZnMc_pappalysin_like"/>
    <property type="match status" value="1"/>
</dbReference>
<dbReference type="Gene3D" id="3.40.390.10">
    <property type="entry name" value="Collagenase (Catalytic Domain)"/>
    <property type="match status" value="1"/>
</dbReference>
<dbReference type="InterPro" id="IPR024079">
    <property type="entry name" value="MetalloPept_cat_dom_sf"/>
</dbReference>
<dbReference type="InterPro" id="IPR008754">
    <property type="entry name" value="Peptidase_M43"/>
</dbReference>
<dbReference type="PANTHER" id="PTHR47466">
    <property type="match status" value="1"/>
</dbReference>
<dbReference type="PANTHER" id="PTHR47466:SF1">
    <property type="entry name" value="METALLOPROTEASE MEP1 (AFU_ORTHOLOGUE AFUA_1G07730)-RELATED"/>
    <property type="match status" value="1"/>
</dbReference>
<dbReference type="Pfam" id="PF05572">
    <property type="entry name" value="Peptidase_M43"/>
    <property type="match status" value="1"/>
</dbReference>
<dbReference type="SUPFAM" id="SSF55486">
    <property type="entry name" value="Metalloproteases ('zincins'), catalytic domain"/>
    <property type="match status" value="1"/>
</dbReference>
<evidence type="ECO:0000250" key="1"/>
<evidence type="ECO:0000255" key="2"/>
<evidence type="ECO:0000305" key="3"/>
<keyword id="KW-1015">Disulfide bond</keyword>
<keyword id="KW-0325">Glycoprotein</keyword>
<keyword id="KW-0378">Hydrolase</keyword>
<keyword id="KW-0479">Metal-binding</keyword>
<keyword id="KW-0482">Metalloprotease</keyword>
<keyword id="KW-0645">Protease</keyword>
<keyword id="KW-1185">Reference proteome</keyword>
<keyword id="KW-0964">Secreted</keyword>
<keyword id="KW-0732">Signal</keyword>
<keyword id="KW-0843">Virulence</keyword>
<keyword id="KW-0862">Zinc</keyword>
<feature type="signal peptide" evidence="2">
    <location>
        <begin position="1"/>
        <end position="22"/>
    </location>
</feature>
<feature type="chain" id="PRO_0000407198" description="Extracellular metalloprotease AFUA_1G07730">
    <location>
        <begin position="23"/>
        <end position="322"/>
    </location>
</feature>
<feature type="active site" evidence="1">
    <location>
        <position position="234"/>
    </location>
</feature>
<feature type="binding site" evidence="1">
    <location>
        <position position="233"/>
    </location>
    <ligand>
        <name>Zn(2+)</name>
        <dbReference type="ChEBI" id="CHEBI:29105"/>
        <note>catalytic</note>
    </ligand>
</feature>
<feature type="binding site" evidence="1">
    <location>
        <position position="237"/>
    </location>
    <ligand>
        <name>Zn(2+)</name>
        <dbReference type="ChEBI" id="CHEBI:29105"/>
        <note>catalytic</note>
    </ligand>
</feature>
<feature type="glycosylation site" description="N-linked (GlcNAc...) asparagine" evidence="2">
    <location>
        <position position="123"/>
    </location>
</feature>
<feature type="glycosylation site" description="N-linked (GlcNAc...) asparagine" evidence="2">
    <location>
        <position position="197"/>
    </location>
</feature>
<feature type="disulfide bond" evidence="1">
    <location>
        <begin position="272"/>
        <end position="299"/>
    </location>
</feature>
<proteinExistence type="inferred from homology"/>
<comment type="function">
    <text evidence="1">Secreted metalloproteinase that allows assimilation of proteinaceous substrates. Plays a pivotal role as a pathogenicity determinant during infections and contributes to the ability of the pathogen to persist within the mammalian host (By similarity).</text>
</comment>
<comment type="subcellular location">
    <subcellularLocation>
        <location evidence="1">Secreted</location>
    </subcellularLocation>
</comment>
<comment type="similarity">
    <text evidence="3">Belongs to the peptidase M43B family.</text>
</comment>
<comment type="sequence caution" evidence="3">
    <conflict type="erroneous initiation">
        <sequence resource="EMBL-CDS" id="EAL88481"/>
    </conflict>
    <text>Extended N-terminus.</text>
</comment>
<accession>Q4WJ01</accession>
<name>MEP1_ASPFU</name>
<reference key="1">
    <citation type="journal article" date="2005" name="Nature">
        <title>Genomic sequence of the pathogenic and allergenic filamentous fungus Aspergillus fumigatus.</title>
        <authorList>
            <person name="Nierman W.C."/>
            <person name="Pain A."/>
            <person name="Anderson M.J."/>
            <person name="Wortman J.R."/>
            <person name="Kim H.S."/>
            <person name="Arroyo J."/>
            <person name="Berriman M."/>
            <person name="Abe K."/>
            <person name="Archer D.B."/>
            <person name="Bermejo C."/>
            <person name="Bennett J.W."/>
            <person name="Bowyer P."/>
            <person name="Chen D."/>
            <person name="Collins M."/>
            <person name="Coulsen R."/>
            <person name="Davies R."/>
            <person name="Dyer P.S."/>
            <person name="Farman M.L."/>
            <person name="Fedorova N."/>
            <person name="Fedorova N.D."/>
            <person name="Feldblyum T.V."/>
            <person name="Fischer R."/>
            <person name="Fosker N."/>
            <person name="Fraser A."/>
            <person name="Garcia J.L."/>
            <person name="Garcia M.J."/>
            <person name="Goble A."/>
            <person name="Goldman G.H."/>
            <person name="Gomi K."/>
            <person name="Griffith-Jones S."/>
            <person name="Gwilliam R."/>
            <person name="Haas B.J."/>
            <person name="Haas H."/>
            <person name="Harris D.E."/>
            <person name="Horiuchi H."/>
            <person name="Huang J."/>
            <person name="Humphray S."/>
            <person name="Jimenez J."/>
            <person name="Keller N."/>
            <person name="Khouri H."/>
            <person name="Kitamoto K."/>
            <person name="Kobayashi T."/>
            <person name="Konzack S."/>
            <person name="Kulkarni R."/>
            <person name="Kumagai T."/>
            <person name="Lafton A."/>
            <person name="Latge J.-P."/>
            <person name="Li W."/>
            <person name="Lord A."/>
            <person name="Lu C."/>
            <person name="Majoros W.H."/>
            <person name="May G.S."/>
            <person name="Miller B.L."/>
            <person name="Mohamoud Y."/>
            <person name="Molina M."/>
            <person name="Monod M."/>
            <person name="Mouyna I."/>
            <person name="Mulligan S."/>
            <person name="Murphy L.D."/>
            <person name="O'Neil S."/>
            <person name="Paulsen I."/>
            <person name="Penalva M.A."/>
            <person name="Pertea M."/>
            <person name="Price C."/>
            <person name="Pritchard B.L."/>
            <person name="Quail M.A."/>
            <person name="Rabbinowitsch E."/>
            <person name="Rawlins N."/>
            <person name="Rajandream M.A."/>
            <person name="Reichard U."/>
            <person name="Renauld H."/>
            <person name="Robson G.D."/>
            <person name="Rodriguez de Cordoba S."/>
            <person name="Rodriguez-Pena J.M."/>
            <person name="Ronning C.M."/>
            <person name="Rutter S."/>
            <person name="Salzberg S.L."/>
            <person name="Sanchez M."/>
            <person name="Sanchez-Ferrero J.C."/>
            <person name="Saunders D."/>
            <person name="Seeger K."/>
            <person name="Squares R."/>
            <person name="Squares S."/>
            <person name="Takeuchi M."/>
            <person name="Tekaia F."/>
            <person name="Turner G."/>
            <person name="Vazquez de Aldana C.R."/>
            <person name="Weidman J."/>
            <person name="White O."/>
            <person name="Woodward J.R."/>
            <person name="Yu J.-H."/>
            <person name="Fraser C.M."/>
            <person name="Galagan J.E."/>
            <person name="Asai K."/>
            <person name="Machida M."/>
            <person name="Hall N."/>
            <person name="Barrell B.G."/>
            <person name="Denning D.W."/>
        </authorList>
    </citation>
    <scope>NUCLEOTIDE SEQUENCE [LARGE SCALE GENOMIC DNA]</scope>
    <source>
        <strain>ATCC MYA-4609 / CBS 101355 / FGSC A1100 / Af293</strain>
    </source>
</reference>
<organism>
    <name type="scientific">Aspergillus fumigatus (strain ATCC MYA-4609 / CBS 101355 / FGSC A1100 / Af293)</name>
    <name type="common">Neosartorya fumigata</name>
    <dbReference type="NCBI Taxonomy" id="330879"/>
    <lineage>
        <taxon>Eukaryota</taxon>
        <taxon>Fungi</taxon>
        <taxon>Dikarya</taxon>
        <taxon>Ascomycota</taxon>
        <taxon>Pezizomycotina</taxon>
        <taxon>Eurotiomycetes</taxon>
        <taxon>Eurotiomycetidae</taxon>
        <taxon>Eurotiales</taxon>
        <taxon>Aspergillaceae</taxon>
        <taxon>Aspergillus</taxon>
        <taxon>Aspergillus subgen. Fumigati</taxon>
    </lineage>
</organism>